<keyword id="KW-0067">ATP-binding</keyword>
<keyword id="KW-1015">Disulfide bond</keyword>
<keyword id="KW-0496">Mitochondrion</keyword>
<keyword id="KW-0547">Nucleotide-binding</keyword>
<keyword id="KW-1185">Reference proteome</keyword>
<keyword id="KW-0694">RNA-binding</keyword>
<keyword id="KW-0808">Transferase</keyword>
<keyword id="KW-0819">tRNA processing</keyword>
<keyword id="KW-0820">tRNA-binding</keyword>
<sequence length="451" mass="51498">MINNINRIKKTYNTFLNVNKLRYSTSIISSNILENDNNNIDDFEQVLKSTKVRMPTSALLLPKKPKVCIGMSGGVDSTITAKLLKLQGFDVTGVFIKSWDEVEDTGRCQGERDWKDALEASNFLDIPMYKADFVKDYWNRVFVDFLKDYKNGLTPNPDVWCNREIKFDLFFDFAKENFGVDYIATGHYSNLYYGEENVGDNNNNNLQLHRAIDKNKDQTFFLCMTKGERLKQAIFPIGGFTKENIVSFAKTIPNFSKITSKKSSRGICFIGKRPLPDFLSQYMTLKPGDFFDISTNSFIKGKKHKGSVCYTMGQKANIDSLSERYFIVRSDIERNIVYVCPESQFDQFSLYYEFNTHSFNWINEIPTEVKSEQGFKGRGICRHRGDVVNLTIKDTGKTSPIDGSVIYSVNLDQPLRSVASGQILCLFDRNTDRCFGGGVINSSPLYNPTQF</sequence>
<comment type="function">
    <text evidence="2">Catalyzes the 2-thiolation of uridine at the wobble position (U34) of mitochondrial tRNA(Lys), tRNA(Glu) and tRNA(Gln). Required for the formation of 5-taurinomethyl-2-thiouridine (tm5s2U) of mitochondrial tRNA(Lys), tRNA(Glu), and tRNA(Gln) at the wobble position. ATP is required to activate the C2 atom of the wobble base.</text>
</comment>
<comment type="catalytic activity">
    <reaction evidence="2">
        <text>5-taurinomethyluridine(34) in tRNA + S-sulfanyl-L-cysteinyl-[protein] + AH2 + ATP = 5-taurinomethyl-2-thiouridine(34) in tRNA + L-cysteinyl-[protein] + A + AMP + diphosphate + H(+)</text>
        <dbReference type="Rhea" id="RHEA:47040"/>
        <dbReference type="Rhea" id="RHEA-COMP:10131"/>
        <dbReference type="Rhea" id="RHEA-COMP:11726"/>
        <dbReference type="Rhea" id="RHEA-COMP:11732"/>
        <dbReference type="Rhea" id="RHEA-COMP:11733"/>
        <dbReference type="ChEBI" id="CHEBI:13193"/>
        <dbReference type="ChEBI" id="CHEBI:15378"/>
        <dbReference type="ChEBI" id="CHEBI:17499"/>
        <dbReference type="ChEBI" id="CHEBI:29950"/>
        <dbReference type="ChEBI" id="CHEBI:30616"/>
        <dbReference type="ChEBI" id="CHEBI:33019"/>
        <dbReference type="ChEBI" id="CHEBI:61963"/>
        <dbReference type="ChEBI" id="CHEBI:87171"/>
        <dbReference type="ChEBI" id="CHEBI:87172"/>
        <dbReference type="ChEBI" id="CHEBI:456215"/>
        <dbReference type="EC" id="2.8.1.14"/>
    </reaction>
</comment>
<comment type="subcellular location">
    <subcellularLocation>
        <location evidence="1">Mitochondrion</location>
    </subcellularLocation>
</comment>
<comment type="miscellaneous">
    <text evidence="1">During the reaction, ATP is used to activate the C2 atom of U34 by adenylation. After this, the persulfide sulfur on the catalytic cysteine is transferred to the C2 atom of the wobble base (U34) of mitochondrial tRNA(Lys), tRNA(Glu) and tRNA(Gln). The reaction probably involves hydrogen sulfide that is generated from the persulfide intermediate and that acts as a nucleophile towards the activated C2 atom on U34. Subsequently, a transient disulfide bond is formed between the two active site cysteine residues (By similarity).</text>
</comment>
<comment type="similarity">
    <text evidence="3">Belongs to the MnmA/TRMU family.</text>
</comment>
<accession>Q54I63</accession>
<proteinExistence type="inferred from homology"/>
<name>MTU1_DICDI</name>
<organism>
    <name type="scientific">Dictyostelium discoideum</name>
    <name type="common">Social amoeba</name>
    <dbReference type="NCBI Taxonomy" id="44689"/>
    <lineage>
        <taxon>Eukaryota</taxon>
        <taxon>Amoebozoa</taxon>
        <taxon>Evosea</taxon>
        <taxon>Eumycetozoa</taxon>
        <taxon>Dictyostelia</taxon>
        <taxon>Dictyosteliales</taxon>
        <taxon>Dictyosteliaceae</taxon>
        <taxon>Dictyostelium</taxon>
    </lineage>
</organism>
<protein>
    <recommendedName>
        <fullName>Mitochondrial tRNA-specific 2-thiouridylase 1</fullName>
        <ecNumber evidence="2">2.8.1.14</ecNumber>
    </recommendedName>
</protein>
<feature type="chain" id="PRO_0000349876" description="Mitochondrial tRNA-specific 2-thiouridylase 1">
    <location>
        <begin position="1"/>
        <end position="451"/>
    </location>
</feature>
<feature type="region of interest" description="Interaction with target base in tRNA" evidence="1">
    <location>
        <begin position="156"/>
        <end position="158"/>
    </location>
</feature>
<feature type="region of interest" description="Interaction with tRNA" evidence="1">
    <location>
        <begin position="216"/>
        <end position="218"/>
    </location>
</feature>
<feature type="region of interest" description="Interaction with tRNA" evidence="1">
    <location>
        <begin position="386"/>
        <end position="387"/>
    </location>
</feature>
<feature type="active site" description="Nucleophile" evidence="1">
    <location>
        <position position="161"/>
    </location>
</feature>
<feature type="active site" description="Cysteine persulfide intermediate" evidence="1">
    <location>
        <position position="268"/>
    </location>
</feature>
<feature type="binding site" evidence="1">
    <location>
        <begin position="70"/>
        <end position="77"/>
    </location>
    <ligand>
        <name>ATP</name>
        <dbReference type="ChEBI" id="CHEBI:30616"/>
    </ligand>
</feature>
<feature type="binding site" evidence="1">
    <location>
        <position position="186"/>
    </location>
    <ligand>
        <name>ATP</name>
        <dbReference type="ChEBI" id="CHEBI:30616"/>
    </ligand>
</feature>
<feature type="site" description="Interaction with tRNA" evidence="1">
    <location>
        <position position="187"/>
    </location>
</feature>
<feature type="site" description="Interaction with tRNA" evidence="1">
    <location>
        <position position="422"/>
    </location>
</feature>
<feature type="disulfide bond" description="Alternate" evidence="1">
    <location>
        <begin position="161"/>
        <end position="268"/>
    </location>
</feature>
<dbReference type="EC" id="2.8.1.14" evidence="2"/>
<dbReference type="EMBL" id="AAFI02000129">
    <property type="protein sequence ID" value="EAL62944.1"/>
    <property type="molecule type" value="Genomic_DNA"/>
</dbReference>
<dbReference type="RefSeq" id="XP_636447.1">
    <property type="nucleotide sequence ID" value="XM_631355.1"/>
</dbReference>
<dbReference type="SMR" id="Q54I63"/>
<dbReference type="FunCoup" id="Q54I63">
    <property type="interactions" value="308"/>
</dbReference>
<dbReference type="STRING" id="44689.Q54I63"/>
<dbReference type="PaxDb" id="44689-DDB0238286"/>
<dbReference type="EnsemblProtists" id="EAL62944">
    <property type="protein sequence ID" value="EAL62944"/>
    <property type="gene ID" value="DDB_G0288979"/>
</dbReference>
<dbReference type="GeneID" id="8626899"/>
<dbReference type="KEGG" id="ddi:DDB_G0288979"/>
<dbReference type="dictyBase" id="DDB_G0288979">
    <property type="gene designation" value="trmu"/>
</dbReference>
<dbReference type="VEuPathDB" id="AmoebaDB:DDB_G0288979"/>
<dbReference type="eggNOG" id="KOG2805">
    <property type="taxonomic scope" value="Eukaryota"/>
</dbReference>
<dbReference type="HOGENOM" id="CLU_035188_1_1_1"/>
<dbReference type="InParanoid" id="Q54I63"/>
<dbReference type="OMA" id="LFMRNWN"/>
<dbReference type="PhylomeDB" id="Q54I63"/>
<dbReference type="PRO" id="PR:Q54I63"/>
<dbReference type="Proteomes" id="UP000002195">
    <property type="component" value="Chromosome 5"/>
</dbReference>
<dbReference type="GO" id="GO:0005739">
    <property type="term" value="C:mitochondrion"/>
    <property type="evidence" value="ECO:0000250"/>
    <property type="project" value="dictyBase"/>
</dbReference>
<dbReference type="GO" id="GO:0005524">
    <property type="term" value="F:ATP binding"/>
    <property type="evidence" value="ECO:0007669"/>
    <property type="project" value="UniProtKB-KW"/>
</dbReference>
<dbReference type="GO" id="GO:0000049">
    <property type="term" value="F:tRNA binding"/>
    <property type="evidence" value="ECO:0007669"/>
    <property type="project" value="UniProtKB-KW"/>
</dbReference>
<dbReference type="GO" id="GO:0061708">
    <property type="term" value="F:tRNA-5-taurinomethyluridine 2-sulfurtransferase"/>
    <property type="evidence" value="ECO:0007669"/>
    <property type="project" value="UniProtKB-EC"/>
</dbReference>
<dbReference type="GO" id="GO:0002143">
    <property type="term" value="P:tRNA wobble position uridine thiolation"/>
    <property type="evidence" value="ECO:0000318"/>
    <property type="project" value="GO_Central"/>
</dbReference>
<dbReference type="CDD" id="cd01998">
    <property type="entry name" value="MnmA_TRMU-like"/>
    <property type="match status" value="1"/>
</dbReference>
<dbReference type="FunFam" id="3.40.50.620:FF:000104">
    <property type="entry name" value="Mitochondrial tRNA-specific 2-thiouridylase 1"/>
    <property type="match status" value="1"/>
</dbReference>
<dbReference type="Gene3D" id="2.30.30.280">
    <property type="entry name" value="Adenine nucleotide alpha hydrolases-like domains"/>
    <property type="match status" value="1"/>
</dbReference>
<dbReference type="Gene3D" id="3.40.50.620">
    <property type="entry name" value="HUPs"/>
    <property type="match status" value="1"/>
</dbReference>
<dbReference type="Gene3D" id="2.40.30.10">
    <property type="entry name" value="Translation factors"/>
    <property type="match status" value="1"/>
</dbReference>
<dbReference type="InterPro" id="IPR004506">
    <property type="entry name" value="MnmA-like"/>
</dbReference>
<dbReference type="InterPro" id="IPR046885">
    <property type="entry name" value="MnmA-like_C"/>
</dbReference>
<dbReference type="InterPro" id="IPR046884">
    <property type="entry name" value="MnmA-like_central"/>
</dbReference>
<dbReference type="InterPro" id="IPR023382">
    <property type="entry name" value="MnmA-like_central_sf"/>
</dbReference>
<dbReference type="InterPro" id="IPR014729">
    <property type="entry name" value="Rossmann-like_a/b/a_fold"/>
</dbReference>
<dbReference type="NCBIfam" id="NF001138">
    <property type="entry name" value="PRK00143.1"/>
    <property type="match status" value="1"/>
</dbReference>
<dbReference type="NCBIfam" id="TIGR00420">
    <property type="entry name" value="trmU"/>
    <property type="match status" value="1"/>
</dbReference>
<dbReference type="PANTHER" id="PTHR11933:SF5">
    <property type="entry name" value="MITOCHONDRIAL TRNA-SPECIFIC 2-THIOURIDYLASE 1"/>
    <property type="match status" value="1"/>
</dbReference>
<dbReference type="PANTHER" id="PTHR11933">
    <property type="entry name" value="TRNA 5-METHYLAMINOMETHYL-2-THIOURIDYLATE -METHYLTRANSFERASE"/>
    <property type="match status" value="1"/>
</dbReference>
<dbReference type="Pfam" id="PF03054">
    <property type="entry name" value="tRNA_Me_trans"/>
    <property type="match status" value="1"/>
</dbReference>
<dbReference type="Pfam" id="PF20258">
    <property type="entry name" value="tRNA_Me_trans_C"/>
    <property type="match status" value="1"/>
</dbReference>
<dbReference type="Pfam" id="PF20259">
    <property type="entry name" value="tRNA_Me_trans_M"/>
    <property type="match status" value="1"/>
</dbReference>
<dbReference type="SUPFAM" id="SSF52402">
    <property type="entry name" value="Adenine nucleotide alpha hydrolases-like"/>
    <property type="match status" value="1"/>
</dbReference>
<reference key="1">
    <citation type="journal article" date="2005" name="Nature">
        <title>The genome of the social amoeba Dictyostelium discoideum.</title>
        <authorList>
            <person name="Eichinger L."/>
            <person name="Pachebat J.A."/>
            <person name="Gloeckner G."/>
            <person name="Rajandream M.A."/>
            <person name="Sucgang R."/>
            <person name="Berriman M."/>
            <person name="Song J."/>
            <person name="Olsen R."/>
            <person name="Szafranski K."/>
            <person name="Xu Q."/>
            <person name="Tunggal B."/>
            <person name="Kummerfeld S."/>
            <person name="Madera M."/>
            <person name="Konfortov B.A."/>
            <person name="Rivero F."/>
            <person name="Bankier A.T."/>
            <person name="Lehmann R."/>
            <person name="Hamlin N."/>
            <person name="Davies R."/>
            <person name="Gaudet P."/>
            <person name="Fey P."/>
            <person name="Pilcher K."/>
            <person name="Chen G."/>
            <person name="Saunders D."/>
            <person name="Sodergren E.J."/>
            <person name="Davis P."/>
            <person name="Kerhornou A."/>
            <person name="Nie X."/>
            <person name="Hall N."/>
            <person name="Anjard C."/>
            <person name="Hemphill L."/>
            <person name="Bason N."/>
            <person name="Farbrother P."/>
            <person name="Desany B."/>
            <person name="Just E."/>
            <person name="Morio T."/>
            <person name="Rost R."/>
            <person name="Churcher C.M."/>
            <person name="Cooper J."/>
            <person name="Haydock S."/>
            <person name="van Driessche N."/>
            <person name="Cronin A."/>
            <person name="Goodhead I."/>
            <person name="Muzny D.M."/>
            <person name="Mourier T."/>
            <person name="Pain A."/>
            <person name="Lu M."/>
            <person name="Harper D."/>
            <person name="Lindsay R."/>
            <person name="Hauser H."/>
            <person name="James K.D."/>
            <person name="Quiles M."/>
            <person name="Madan Babu M."/>
            <person name="Saito T."/>
            <person name="Buchrieser C."/>
            <person name="Wardroper A."/>
            <person name="Felder M."/>
            <person name="Thangavelu M."/>
            <person name="Johnson D."/>
            <person name="Knights A."/>
            <person name="Loulseged H."/>
            <person name="Mungall K.L."/>
            <person name="Oliver K."/>
            <person name="Price C."/>
            <person name="Quail M.A."/>
            <person name="Urushihara H."/>
            <person name="Hernandez J."/>
            <person name="Rabbinowitsch E."/>
            <person name="Steffen D."/>
            <person name="Sanders M."/>
            <person name="Ma J."/>
            <person name="Kohara Y."/>
            <person name="Sharp S."/>
            <person name="Simmonds M.N."/>
            <person name="Spiegler S."/>
            <person name="Tivey A."/>
            <person name="Sugano S."/>
            <person name="White B."/>
            <person name="Walker D."/>
            <person name="Woodward J.R."/>
            <person name="Winckler T."/>
            <person name="Tanaka Y."/>
            <person name="Shaulsky G."/>
            <person name="Schleicher M."/>
            <person name="Weinstock G.M."/>
            <person name="Rosenthal A."/>
            <person name="Cox E.C."/>
            <person name="Chisholm R.L."/>
            <person name="Gibbs R.A."/>
            <person name="Loomis W.F."/>
            <person name="Platzer M."/>
            <person name="Kay R.R."/>
            <person name="Williams J.G."/>
            <person name="Dear P.H."/>
            <person name="Noegel A.A."/>
            <person name="Barrell B.G."/>
            <person name="Kuspa A."/>
        </authorList>
    </citation>
    <scope>NUCLEOTIDE SEQUENCE [LARGE SCALE GENOMIC DNA]</scope>
    <source>
        <strain>AX4</strain>
    </source>
</reference>
<gene>
    <name type="primary">trmu</name>
    <name type="ORF">DDB_G0288979</name>
</gene>
<evidence type="ECO:0000250" key="1"/>
<evidence type="ECO:0000250" key="2">
    <source>
        <dbReference type="UniProtKB" id="Q12093"/>
    </source>
</evidence>
<evidence type="ECO:0000305" key="3"/>